<dbReference type="EC" id="4.2.1.96" evidence="1"/>
<dbReference type="EMBL" id="CP000551">
    <property type="protein sequence ID" value="ABM69835.1"/>
    <property type="molecule type" value="Genomic_DNA"/>
</dbReference>
<dbReference type="RefSeq" id="WP_011818001.1">
    <property type="nucleotide sequence ID" value="NC_008816.1"/>
</dbReference>
<dbReference type="SMR" id="A2BPX4"/>
<dbReference type="STRING" id="146891.A9601_05471"/>
<dbReference type="KEGG" id="pmb:A9601_05471"/>
<dbReference type="eggNOG" id="COG2154">
    <property type="taxonomic scope" value="Bacteria"/>
</dbReference>
<dbReference type="HOGENOM" id="CLU_081974_3_2_3"/>
<dbReference type="OrthoDB" id="9794987at2"/>
<dbReference type="Proteomes" id="UP000002590">
    <property type="component" value="Chromosome"/>
</dbReference>
<dbReference type="GO" id="GO:0008124">
    <property type="term" value="F:4-alpha-hydroxytetrahydrobiopterin dehydratase activity"/>
    <property type="evidence" value="ECO:0007669"/>
    <property type="project" value="UniProtKB-UniRule"/>
</dbReference>
<dbReference type="GO" id="GO:0006729">
    <property type="term" value="P:tetrahydrobiopterin biosynthetic process"/>
    <property type="evidence" value="ECO:0007669"/>
    <property type="project" value="InterPro"/>
</dbReference>
<dbReference type="CDD" id="cd00914">
    <property type="entry name" value="PCD_DCoH_subfamily_b"/>
    <property type="match status" value="1"/>
</dbReference>
<dbReference type="Gene3D" id="3.30.1360.20">
    <property type="entry name" value="Transcriptional coactivator/pterin dehydratase"/>
    <property type="match status" value="1"/>
</dbReference>
<dbReference type="HAMAP" id="MF_00434">
    <property type="entry name" value="Pterin_4_alpha"/>
    <property type="match status" value="1"/>
</dbReference>
<dbReference type="InterPro" id="IPR036428">
    <property type="entry name" value="PCD_sf"/>
</dbReference>
<dbReference type="InterPro" id="IPR001533">
    <property type="entry name" value="Pterin_deHydtase"/>
</dbReference>
<dbReference type="NCBIfam" id="NF002017">
    <property type="entry name" value="PRK00823.1-2"/>
    <property type="match status" value="1"/>
</dbReference>
<dbReference type="NCBIfam" id="NF002018">
    <property type="entry name" value="PRK00823.1-3"/>
    <property type="match status" value="1"/>
</dbReference>
<dbReference type="PANTHER" id="PTHR12599">
    <property type="entry name" value="PTERIN-4-ALPHA-CARBINOLAMINE DEHYDRATASE"/>
    <property type="match status" value="1"/>
</dbReference>
<dbReference type="PANTHER" id="PTHR12599:SF0">
    <property type="entry name" value="PTERIN-4-ALPHA-CARBINOLAMINE DEHYDRATASE"/>
    <property type="match status" value="1"/>
</dbReference>
<dbReference type="Pfam" id="PF01329">
    <property type="entry name" value="Pterin_4a"/>
    <property type="match status" value="1"/>
</dbReference>
<dbReference type="SUPFAM" id="SSF55248">
    <property type="entry name" value="PCD-like"/>
    <property type="match status" value="1"/>
</dbReference>
<keyword id="KW-0456">Lyase</keyword>
<organism>
    <name type="scientific">Prochlorococcus marinus (strain AS9601)</name>
    <dbReference type="NCBI Taxonomy" id="146891"/>
    <lineage>
        <taxon>Bacteria</taxon>
        <taxon>Bacillati</taxon>
        <taxon>Cyanobacteriota</taxon>
        <taxon>Cyanophyceae</taxon>
        <taxon>Synechococcales</taxon>
        <taxon>Prochlorococcaceae</taxon>
        <taxon>Prochlorococcus</taxon>
    </lineage>
</organism>
<reference key="1">
    <citation type="journal article" date="2007" name="PLoS Genet.">
        <title>Patterns and implications of gene gain and loss in the evolution of Prochlorococcus.</title>
        <authorList>
            <person name="Kettler G.C."/>
            <person name="Martiny A.C."/>
            <person name="Huang K."/>
            <person name="Zucker J."/>
            <person name="Coleman M.L."/>
            <person name="Rodrigue S."/>
            <person name="Chen F."/>
            <person name="Lapidus A."/>
            <person name="Ferriera S."/>
            <person name="Johnson J."/>
            <person name="Steglich C."/>
            <person name="Church G.M."/>
            <person name="Richardson P."/>
            <person name="Chisholm S.W."/>
        </authorList>
    </citation>
    <scope>NUCLEOTIDE SEQUENCE [LARGE SCALE GENOMIC DNA]</scope>
    <source>
        <strain>AS9601</strain>
    </source>
</reference>
<name>PHS_PROMS</name>
<accession>A2BPX4</accession>
<evidence type="ECO:0000255" key="1">
    <source>
        <dbReference type="HAMAP-Rule" id="MF_00434"/>
    </source>
</evidence>
<sequence>MEPYILQDEELNELVVKIPGWEIKSKQIQREFNFANFIEAFAFMTKVALICEKYNHHPNWENVYAKVIIKLNTHDLGGITNLDQTLASEINKIFDQ</sequence>
<feature type="chain" id="PRO_1000050434" description="Putative pterin-4-alpha-carbinolamine dehydratase">
    <location>
        <begin position="1"/>
        <end position="96"/>
    </location>
</feature>
<proteinExistence type="inferred from homology"/>
<comment type="catalytic activity">
    <reaction evidence="1">
        <text>(4aS,6R)-4a-hydroxy-L-erythro-5,6,7,8-tetrahydrobiopterin = (6R)-L-erythro-6,7-dihydrobiopterin + H2O</text>
        <dbReference type="Rhea" id="RHEA:11920"/>
        <dbReference type="ChEBI" id="CHEBI:15377"/>
        <dbReference type="ChEBI" id="CHEBI:15642"/>
        <dbReference type="ChEBI" id="CHEBI:43120"/>
        <dbReference type="EC" id="4.2.1.96"/>
    </reaction>
</comment>
<comment type="similarity">
    <text evidence="1">Belongs to the pterin-4-alpha-carbinolamine dehydratase family.</text>
</comment>
<protein>
    <recommendedName>
        <fullName evidence="1">Putative pterin-4-alpha-carbinolamine dehydratase</fullName>
        <shortName evidence="1">PHS</shortName>
        <ecNumber evidence="1">4.2.1.96</ecNumber>
    </recommendedName>
    <alternativeName>
        <fullName evidence="1">4-alpha-hydroxy-tetrahydropterin dehydratase</fullName>
    </alternativeName>
    <alternativeName>
        <fullName evidence="1">Pterin carbinolamine dehydratase</fullName>
        <shortName evidence="1">PCD</shortName>
    </alternativeName>
</protein>
<gene>
    <name type="ordered locus">A9601_05471</name>
</gene>